<accession>Q9D0I4</accession>
<accession>B1AVI3</accession>
<accession>Q9D330</accession>
<dbReference type="EMBL" id="AK011400">
    <property type="protein sequence ID" value="BAB27592.1"/>
    <property type="molecule type" value="mRNA"/>
</dbReference>
<dbReference type="EMBL" id="AK018526">
    <property type="protein sequence ID" value="BAB31255.1"/>
    <property type="molecule type" value="mRNA"/>
</dbReference>
<dbReference type="EMBL" id="AK034718">
    <property type="protein sequence ID" value="BAC28806.1"/>
    <property type="molecule type" value="mRNA"/>
</dbReference>
<dbReference type="EMBL" id="AK154503">
    <property type="protein sequence ID" value="BAE32634.1"/>
    <property type="molecule type" value="mRNA"/>
</dbReference>
<dbReference type="EMBL" id="AL683893">
    <property type="status" value="NOT_ANNOTATED_CDS"/>
    <property type="molecule type" value="Genomic_DNA"/>
</dbReference>
<dbReference type="EMBL" id="BC028639">
    <property type="protein sequence ID" value="AAH28639.1"/>
    <property type="molecule type" value="mRNA"/>
</dbReference>
<dbReference type="CCDS" id="CCDS18164.1"/>
<dbReference type="RefSeq" id="NP_080619.2">
    <property type="nucleotide sequence ID" value="NM_026343.2"/>
</dbReference>
<dbReference type="RefSeq" id="XP_006538271.1">
    <property type="nucleotide sequence ID" value="XM_006538208.3"/>
</dbReference>
<dbReference type="RefSeq" id="XP_036020268.1">
    <property type="nucleotide sequence ID" value="XM_036164375.1"/>
</dbReference>
<dbReference type="SMR" id="Q9D0I4"/>
<dbReference type="BioGRID" id="212398">
    <property type="interactions" value="6"/>
</dbReference>
<dbReference type="FunCoup" id="Q9D0I4">
    <property type="interactions" value="2890"/>
</dbReference>
<dbReference type="IntAct" id="Q9D0I4">
    <property type="interactions" value="3"/>
</dbReference>
<dbReference type="MINT" id="Q9D0I4"/>
<dbReference type="STRING" id="10090.ENSMUSP00000103348"/>
<dbReference type="iPTMnet" id="Q9D0I4"/>
<dbReference type="PhosphoSitePlus" id="Q9D0I4"/>
<dbReference type="SwissPalm" id="Q9D0I4"/>
<dbReference type="jPOST" id="Q9D0I4"/>
<dbReference type="PaxDb" id="10090-ENSMUSP00000103348"/>
<dbReference type="PeptideAtlas" id="Q9D0I4"/>
<dbReference type="ProteomicsDB" id="254765"/>
<dbReference type="Pumba" id="Q9D0I4"/>
<dbReference type="Antibodypedia" id="752">
    <property type="antibodies" value="150 antibodies from 26 providers"/>
</dbReference>
<dbReference type="DNASU" id="67727"/>
<dbReference type="Ensembl" id="ENSMUST00000064765.6">
    <property type="protein sequence ID" value="ENSMUSP00000068087.5"/>
    <property type="gene ID" value="ENSMUSG00000061455.14"/>
</dbReference>
<dbReference type="Ensembl" id="ENSMUST00000107720.9">
    <property type="protein sequence ID" value="ENSMUSP00000103348.3"/>
    <property type="gene ID" value="ENSMUSG00000061455.14"/>
</dbReference>
<dbReference type="GeneID" id="67727"/>
<dbReference type="KEGG" id="mmu:67727"/>
<dbReference type="UCSC" id="uc008sux.1">
    <property type="organism name" value="mouse"/>
</dbReference>
<dbReference type="AGR" id="MGI:1914977"/>
<dbReference type="CTD" id="55014"/>
<dbReference type="MGI" id="MGI:1914977">
    <property type="gene designation" value="Stx17"/>
</dbReference>
<dbReference type="VEuPathDB" id="HostDB:ENSMUSG00000061455"/>
<dbReference type="eggNOG" id="KOG0811">
    <property type="taxonomic scope" value="Eukaryota"/>
</dbReference>
<dbReference type="GeneTree" id="ENSGT01000000214440"/>
<dbReference type="HOGENOM" id="CLU_058244_1_0_1"/>
<dbReference type="InParanoid" id="Q9D0I4"/>
<dbReference type="OMA" id="YPVMGAL"/>
<dbReference type="OrthoDB" id="10035606at2759"/>
<dbReference type="PhylomeDB" id="Q9D0I4"/>
<dbReference type="TreeFam" id="TF323947"/>
<dbReference type="Reactome" id="R-MMU-204005">
    <property type="pathway name" value="COPII-mediated vesicle transport"/>
</dbReference>
<dbReference type="BioGRID-ORCS" id="67727">
    <property type="hits" value="5 hits in 76 CRISPR screens"/>
</dbReference>
<dbReference type="ChiTaRS" id="Stx17">
    <property type="organism name" value="mouse"/>
</dbReference>
<dbReference type="PRO" id="PR:Q9D0I4"/>
<dbReference type="Proteomes" id="UP000000589">
    <property type="component" value="Chromosome 4"/>
</dbReference>
<dbReference type="RNAct" id="Q9D0I4">
    <property type="molecule type" value="protein"/>
</dbReference>
<dbReference type="Bgee" id="ENSMUSG00000061455">
    <property type="expression patterns" value="Expressed in parotid gland and 253 other cell types or tissues"/>
</dbReference>
<dbReference type="ExpressionAtlas" id="Q9D0I4">
    <property type="expression patterns" value="baseline and differential"/>
</dbReference>
<dbReference type="GO" id="GO:0120281">
    <property type="term" value="C:autolysosome membrane"/>
    <property type="evidence" value="ECO:0000250"/>
    <property type="project" value="UniProtKB"/>
</dbReference>
<dbReference type="GO" id="GO:0005776">
    <property type="term" value="C:autophagosome"/>
    <property type="evidence" value="ECO:0000314"/>
    <property type="project" value="UniProtKB"/>
</dbReference>
<dbReference type="GO" id="GO:0000421">
    <property type="term" value="C:autophagosome membrane"/>
    <property type="evidence" value="ECO:0000250"/>
    <property type="project" value="UniProtKB"/>
</dbReference>
<dbReference type="GO" id="GO:0030134">
    <property type="term" value="C:COPII-coated ER to Golgi transport vesicle"/>
    <property type="evidence" value="ECO:0000250"/>
    <property type="project" value="UniProtKB"/>
</dbReference>
<dbReference type="GO" id="GO:0005829">
    <property type="term" value="C:cytosol"/>
    <property type="evidence" value="ECO:0000250"/>
    <property type="project" value="UniProtKB"/>
</dbReference>
<dbReference type="GO" id="GO:0005789">
    <property type="term" value="C:endoplasmic reticulum membrane"/>
    <property type="evidence" value="ECO:0000250"/>
    <property type="project" value="UniProtKB"/>
</dbReference>
<dbReference type="GO" id="GO:0005793">
    <property type="term" value="C:endoplasmic reticulum-Golgi intermediate compartment"/>
    <property type="evidence" value="ECO:0000250"/>
    <property type="project" value="UniProtKB"/>
</dbReference>
<dbReference type="GO" id="GO:0033116">
    <property type="term" value="C:endoplasmic reticulum-Golgi intermediate compartment membrane"/>
    <property type="evidence" value="ECO:0007669"/>
    <property type="project" value="UniProtKB-SubCell"/>
</dbReference>
<dbReference type="GO" id="GO:0012507">
    <property type="term" value="C:ER to Golgi transport vesicle membrane"/>
    <property type="evidence" value="ECO:0007669"/>
    <property type="project" value="UniProtKB-SubCell"/>
</dbReference>
<dbReference type="GO" id="GO:0030897">
    <property type="term" value="C:HOPS complex"/>
    <property type="evidence" value="ECO:0007669"/>
    <property type="project" value="Ensembl"/>
</dbReference>
<dbReference type="GO" id="GO:0044233">
    <property type="term" value="C:mitochondria-associated endoplasmic reticulum membrane contact site"/>
    <property type="evidence" value="ECO:0000266"/>
    <property type="project" value="MGI"/>
</dbReference>
<dbReference type="GO" id="GO:0031966">
    <property type="term" value="C:mitochondrial membrane"/>
    <property type="evidence" value="ECO:0007669"/>
    <property type="project" value="UniProtKB-SubCell"/>
</dbReference>
<dbReference type="GO" id="GO:0005739">
    <property type="term" value="C:mitochondrion"/>
    <property type="evidence" value="ECO:0000250"/>
    <property type="project" value="UniProtKB"/>
</dbReference>
<dbReference type="GO" id="GO:0030868">
    <property type="term" value="C:smooth endoplasmic reticulum membrane"/>
    <property type="evidence" value="ECO:0000250"/>
    <property type="project" value="UniProtKB"/>
</dbReference>
<dbReference type="GO" id="GO:0031201">
    <property type="term" value="C:SNARE complex"/>
    <property type="evidence" value="ECO:0000250"/>
    <property type="project" value="UniProtKB"/>
</dbReference>
<dbReference type="GO" id="GO:0019901">
    <property type="term" value="F:protein kinase binding"/>
    <property type="evidence" value="ECO:0007669"/>
    <property type="project" value="Ensembl"/>
</dbReference>
<dbReference type="GO" id="GO:0019903">
    <property type="term" value="F:protein phosphatase binding"/>
    <property type="evidence" value="ECO:0007669"/>
    <property type="project" value="Ensembl"/>
</dbReference>
<dbReference type="GO" id="GO:0005484">
    <property type="term" value="F:SNAP receptor activity"/>
    <property type="evidence" value="ECO:0000250"/>
    <property type="project" value="UniProtKB"/>
</dbReference>
<dbReference type="GO" id="GO:0000149">
    <property type="term" value="F:SNARE binding"/>
    <property type="evidence" value="ECO:0000250"/>
    <property type="project" value="UniProtKB"/>
</dbReference>
<dbReference type="GO" id="GO:0097352">
    <property type="term" value="P:autophagosome maturation"/>
    <property type="evidence" value="ECO:0000250"/>
    <property type="project" value="UniProtKB"/>
</dbReference>
<dbReference type="GO" id="GO:0016240">
    <property type="term" value="P:autophagosome membrane docking"/>
    <property type="evidence" value="ECO:0007669"/>
    <property type="project" value="Ensembl"/>
</dbReference>
<dbReference type="GO" id="GO:0061909">
    <property type="term" value="P:autophagosome-lysosome fusion"/>
    <property type="evidence" value="ECO:0000250"/>
    <property type="project" value="UniProtKB"/>
</dbReference>
<dbReference type="GO" id="GO:0006888">
    <property type="term" value="P:endoplasmic reticulum to Golgi vesicle-mediated transport"/>
    <property type="evidence" value="ECO:0000250"/>
    <property type="project" value="UniProtKB"/>
</dbReference>
<dbReference type="GO" id="GO:0097111">
    <property type="term" value="P:endoplasmic reticulum-Golgi intermediate compartment organization"/>
    <property type="evidence" value="ECO:0000250"/>
    <property type="project" value="UniProtKB"/>
</dbReference>
<dbReference type="GO" id="GO:0007030">
    <property type="term" value="P:Golgi organization"/>
    <property type="evidence" value="ECO:0000250"/>
    <property type="project" value="UniProtKB"/>
</dbReference>
<dbReference type="GO" id="GO:0006886">
    <property type="term" value="P:intracellular protein transport"/>
    <property type="evidence" value="ECO:0007669"/>
    <property type="project" value="InterPro"/>
</dbReference>
<dbReference type="GO" id="GO:0034497">
    <property type="term" value="P:protein localization to phagophore assembly site"/>
    <property type="evidence" value="ECO:0000266"/>
    <property type="project" value="MGI"/>
</dbReference>
<dbReference type="CDD" id="cd15846">
    <property type="entry name" value="SNARE_syntaxin17"/>
    <property type="match status" value="1"/>
</dbReference>
<dbReference type="FunFam" id="1.20.5.110:FF:000046">
    <property type="entry name" value="syntaxin-17 isoform X1"/>
    <property type="match status" value="1"/>
</dbReference>
<dbReference type="Gene3D" id="1.20.5.110">
    <property type="match status" value="1"/>
</dbReference>
<dbReference type="InterPro" id="IPR010989">
    <property type="entry name" value="SNARE"/>
</dbReference>
<dbReference type="InterPro" id="IPR028676">
    <property type="entry name" value="STX17_SNARE"/>
</dbReference>
<dbReference type="InterPro" id="IPR045242">
    <property type="entry name" value="Syntaxin"/>
</dbReference>
<dbReference type="InterPro" id="IPR006012">
    <property type="entry name" value="Syntaxin/epimorphin_CS"/>
</dbReference>
<dbReference type="InterPro" id="IPR000727">
    <property type="entry name" value="T_SNARE_dom"/>
</dbReference>
<dbReference type="PANTHER" id="PTHR19957">
    <property type="entry name" value="SYNTAXIN"/>
    <property type="match status" value="1"/>
</dbReference>
<dbReference type="PANTHER" id="PTHR19957:SF139">
    <property type="entry name" value="SYNTAXIN-17"/>
    <property type="match status" value="1"/>
</dbReference>
<dbReference type="SMART" id="SM00397">
    <property type="entry name" value="t_SNARE"/>
    <property type="match status" value="1"/>
</dbReference>
<dbReference type="SUPFAM" id="SSF47661">
    <property type="entry name" value="t-snare proteins"/>
    <property type="match status" value="1"/>
</dbReference>
<dbReference type="PROSITE" id="PS00914">
    <property type="entry name" value="SYNTAXIN"/>
    <property type="match status" value="1"/>
</dbReference>
<dbReference type="PROSITE" id="PS50192">
    <property type="entry name" value="T_SNARE"/>
    <property type="match status" value="1"/>
</dbReference>
<protein>
    <recommendedName>
        <fullName evidence="8">Syntaxin-17</fullName>
    </recommendedName>
</protein>
<evidence type="ECO:0000250" key="1">
    <source>
        <dbReference type="UniProtKB" id="P56962"/>
    </source>
</evidence>
<evidence type="ECO:0000250" key="2">
    <source>
        <dbReference type="UniProtKB" id="Q9Z158"/>
    </source>
</evidence>
<evidence type="ECO:0000255" key="3"/>
<evidence type="ECO:0000255" key="4">
    <source>
        <dbReference type="PROSITE-ProRule" id="PRU00202"/>
    </source>
</evidence>
<evidence type="ECO:0000269" key="5">
    <source>
    </source>
</evidence>
<evidence type="ECO:0000269" key="6">
    <source>
    </source>
</evidence>
<evidence type="ECO:0000269" key="7">
    <source>
    </source>
</evidence>
<evidence type="ECO:0000303" key="8">
    <source>
    </source>
</evidence>
<evidence type="ECO:0000305" key="9"/>
<evidence type="ECO:0000312" key="10">
    <source>
        <dbReference type="MGI" id="MGI:1914977"/>
    </source>
</evidence>
<evidence type="ECO:0007744" key="11">
    <source>
    </source>
</evidence>
<gene>
    <name evidence="10" type="primary">Stx17</name>
</gene>
<name>STX17_MOUSE</name>
<proteinExistence type="evidence at protein level"/>
<reference key="1">
    <citation type="journal article" date="2005" name="Science">
        <title>The transcriptional landscape of the mammalian genome.</title>
        <authorList>
            <person name="Carninci P."/>
            <person name="Kasukawa T."/>
            <person name="Katayama S."/>
            <person name="Gough J."/>
            <person name="Frith M.C."/>
            <person name="Maeda N."/>
            <person name="Oyama R."/>
            <person name="Ravasi T."/>
            <person name="Lenhard B."/>
            <person name="Wells C."/>
            <person name="Kodzius R."/>
            <person name="Shimokawa K."/>
            <person name="Bajic V.B."/>
            <person name="Brenner S.E."/>
            <person name="Batalov S."/>
            <person name="Forrest A.R."/>
            <person name="Zavolan M."/>
            <person name="Davis M.J."/>
            <person name="Wilming L.G."/>
            <person name="Aidinis V."/>
            <person name="Allen J.E."/>
            <person name="Ambesi-Impiombato A."/>
            <person name="Apweiler R."/>
            <person name="Aturaliya R.N."/>
            <person name="Bailey T.L."/>
            <person name="Bansal M."/>
            <person name="Baxter L."/>
            <person name="Beisel K.W."/>
            <person name="Bersano T."/>
            <person name="Bono H."/>
            <person name="Chalk A.M."/>
            <person name="Chiu K.P."/>
            <person name="Choudhary V."/>
            <person name="Christoffels A."/>
            <person name="Clutterbuck D.R."/>
            <person name="Crowe M.L."/>
            <person name="Dalla E."/>
            <person name="Dalrymple B.P."/>
            <person name="de Bono B."/>
            <person name="Della Gatta G."/>
            <person name="di Bernardo D."/>
            <person name="Down T."/>
            <person name="Engstrom P."/>
            <person name="Fagiolini M."/>
            <person name="Faulkner G."/>
            <person name="Fletcher C.F."/>
            <person name="Fukushima T."/>
            <person name="Furuno M."/>
            <person name="Futaki S."/>
            <person name="Gariboldi M."/>
            <person name="Georgii-Hemming P."/>
            <person name="Gingeras T.R."/>
            <person name="Gojobori T."/>
            <person name="Green R.E."/>
            <person name="Gustincich S."/>
            <person name="Harbers M."/>
            <person name="Hayashi Y."/>
            <person name="Hensch T.K."/>
            <person name="Hirokawa N."/>
            <person name="Hill D."/>
            <person name="Huminiecki L."/>
            <person name="Iacono M."/>
            <person name="Ikeo K."/>
            <person name="Iwama A."/>
            <person name="Ishikawa T."/>
            <person name="Jakt M."/>
            <person name="Kanapin A."/>
            <person name="Katoh M."/>
            <person name="Kawasawa Y."/>
            <person name="Kelso J."/>
            <person name="Kitamura H."/>
            <person name="Kitano H."/>
            <person name="Kollias G."/>
            <person name="Krishnan S.P."/>
            <person name="Kruger A."/>
            <person name="Kummerfeld S.K."/>
            <person name="Kurochkin I.V."/>
            <person name="Lareau L.F."/>
            <person name="Lazarevic D."/>
            <person name="Lipovich L."/>
            <person name="Liu J."/>
            <person name="Liuni S."/>
            <person name="McWilliam S."/>
            <person name="Madan Babu M."/>
            <person name="Madera M."/>
            <person name="Marchionni L."/>
            <person name="Matsuda H."/>
            <person name="Matsuzawa S."/>
            <person name="Miki H."/>
            <person name="Mignone F."/>
            <person name="Miyake S."/>
            <person name="Morris K."/>
            <person name="Mottagui-Tabar S."/>
            <person name="Mulder N."/>
            <person name="Nakano N."/>
            <person name="Nakauchi H."/>
            <person name="Ng P."/>
            <person name="Nilsson R."/>
            <person name="Nishiguchi S."/>
            <person name="Nishikawa S."/>
            <person name="Nori F."/>
            <person name="Ohara O."/>
            <person name="Okazaki Y."/>
            <person name="Orlando V."/>
            <person name="Pang K.C."/>
            <person name="Pavan W.J."/>
            <person name="Pavesi G."/>
            <person name="Pesole G."/>
            <person name="Petrovsky N."/>
            <person name="Piazza S."/>
            <person name="Reed J."/>
            <person name="Reid J.F."/>
            <person name="Ring B.Z."/>
            <person name="Ringwald M."/>
            <person name="Rost B."/>
            <person name="Ruan Y."/>
            <person name="Salzberg S.L."/>
            <person name="Sandelin A."/>
            <person name="Schneider C."/>
            <person name="Schoenbach C."/>
            <person name="Sekiguchi K."/>
            <person name="Semple C.A."/>
            <person name="Seno S."/>
            <person name="Sessa L."/>
            <person name="Sheng Y."/>
            <person name="Shibata Y."/>
            <person name="Shimada H."/>
            <person name="Shimada K."/>
            <person name="Silva D."/>
            <person name="Sinclair B."/>
            <person name="Sperling S."/>
            <person name="Stupka E."/>
            <person name="Sugiura K."/>
            <person name="Sultana R."/>
            <person name="Takenaka Y."/>
            <person name="Taki K."/>
            <person name="Tammoja K."/>
            <person name="Tan S.L."/>
            <person name="Tang S."/>
            <person name="Taylor M.S."/>
            <person name="Tegner J."/>
            <person name="Teichmann S.A."/>
            <person name="Ueda H.R."/>
            <person name="van Nimwegen E."/>
            <person name="Verardo R."/>
            <person name="Wei C.L."/>
            <person name="Yagi K."/>
            <person name="Yamanishi H."/>
            <person name="Zabarovsky E."/>
            <person name="Zhu S."/>
            <person name="Zimmer A."/>
            <person name="Hide W."/>
            <person name="Bult C."/>
            <person name="Grimmond S.M."/>
            <person name="Teasdale R.D."/>
            <person name="Liu E.T."/>
            <person name="Brusic V."/>
            <person name="Quackenbush J."/>
            <person name="Wahlestedt C."/>
            <person name="Mattick J.S."/>
            <person name="Hume D.A."/>
            <person name="Kai C."/>
            <person name="Sasaki D."/>
            <person name="Tomaru Y."/>
            <person name="Fukuda S."/>
            <person name="Kanamori-Katayama M."/>
            <person name="Suzuki M."/>
            <person name="Aoki J."/>
            <person name="Arakawa T."/>
            <person name="Iida J."/>
            <person name="Imamura K."/>
            <person name="Itoh M."/>
            <person name="Kato T."/>
            <person name="Kawaji H."/>
            <person name="Kawagashira N."/>
            <person name="Kawashima T."/>
            <person name="Kojima M."/>
            <person name="Kondo S."/>
            <person name="Konno H."/>
            <person name="Nakano K."/>
            <person name="Ninomiya N."/>
            <person name="Nishio T."/>
            <person name="Okada M."/>
            <person name="Plessy C."/>
            <person name="Shibata K."/>
            <person name="Shiraki T."/>
            <person name="Suzuki S."/>
            <person name="Tagami M."/>
            <person name="Waki K."/>
            <person name="Watahiki A."/>
            <person name="Okamura-Oho Y."/>
            <person name="Suzuki H."/>
            <person name="Kawai J."/>
            <person name="Hayashizaki Y."/>
        </authorList>
    </citation>
    <scope>NUCLEOTIDE SEQUENCE [LARGE SCALE MRNA]</scope>
    <source>
        <strain>C57BL/6J</strain>
        <strain>NOD</strain>
        <tissue>Colon</tissue>
    </source>
</reference>
<reference key="2">
    <citation type="journal article" date="2009" name="PLoS Biol.">
        <title>Lineage-specific biology revealed by a finished genome assembly of the mouse.</title>
        <authorList>
            <person name="Church D.M."/>
            <person name="Goodstadt L."/>
            <person name="Hillier L.W."/>
            <person name="Zody M.C."/>
            <person name="Goldstein S."/>
            <person name="She X."/>
            <person name="Bult C.J."/>
            <person name="Agarwala R."/>
            <person name="Cherry J.L."/>
            <person name="DiCuccio M."/>
            <person name="Hlavina W."/>
            <person name="Kapustin Y."/>
            <person name="Meric P."/>
            <person name="Maglott D."/>
            <person name="Birtle Z."/>
            <person name="Marques A.C."/>
            <person name="Graves T."/>
            <person name="Zhou S."/>
            <person name="Teague B."/>
            <person name="Potamousis K."/>
            <person name="Churas C."/>
            <person name="Place M."/>
            <person name="Herschleb J."/>
            <person name="Runnheim R."/>
            <person name="Forrest D."/>
            <person name="Amos-Landgraf J."/>
            <person name="Schwartz D.C."/>
            <person name="Cheng Z."/>
            <person name="Lindblad-Toh K."/>
            <person name="Eichler E.E."/>
            <person name="Ponting C.P."/>
        </authorList>
    </citation>
    <scope>NUCLEOTIDE SEQUENCE [LARGE SCALE GENOMIC DNA]</scope>
    <source>
        <strain>C57BL/6J</strain>
    </source>
</reference>
<reference key="3">
    <citation type="journal article" date="2004" name="Genome Res.">
        <title>The status, quality, and expansion of the NIH full-length cDNA project: the Mammalian Gene Collection (MGC).</title>
        <authorList>
            <consortium name="The MGC Project Team"/>
        </authorList>
    </citation>
    <scope>NUCLEOTIDE SEQUENCE [LARGE SCALE MRNA]</scope>
    <source>
        <strain>C57BL/6J</strain>
        <tissue>Thymus</tissue>
    </source>
</reference>
<reference key="4">
    <citation type="journal article" date="2010" name="Cell">
        <title>A tissue-specific atlas of mouse protein phosphorylation and expression.</title>
        <authorList>
            <person name="Huttlin E.L."/>
            <person name="Jedrychowski M.P."/>
            <person name="Elias J.E."/>
            <person name="Goswami T."/>
            <person name="Rad R."/>
            <person name="Beausoleil S.A."/>
            <person name="Villen J."/>
            <person name="Haas W."/>
            <person name="Sowa M.E."/>
            <person name="Gygi S.P."/>
        </authorList>
    </citation>
    <scope>PHOSPHORYLATION [LARGE SCALE ANALYSIS] AT SER-288</scope>
    <scope>IDENTIFICATION BY MASS SPECTROMETRY [LARGE SCALE ANALYSIS]</scope>
    <source>
        <tissue>Brain</tissue>
        <tissue>Heart</tissue>
        <tissue>Kidney</tissue>
        <tissue>Liver</tissue>
        <tissue>Lung</tissue>
        <tissue>Pancreas</tissue>
        <tissue>Spleen</tissue>
        <tissue>Testis</tissue>
    </source>
</reference>
<reference key="5">
    <citation type="journal article" date="2012" name="Biochim. Biophys. Acta">
        <title>Tyrosine phosphorylation of a SNARE protein, Syntaxin 17: Implications for membrane trafficking in the early secretory pathway.</title>
        <authorList>
            <person name="Muppirala M."/>
            <person name="Gupta V."/>
            <person name="Swarup G."/>
        </authorList>
    </citation>
    <scope>PHOSPHORYLATION BY ABL1</scope>
</reference>
<reference key="6">
    <citation type="journal article" date="2012" name="Cell">
        <title>The hairpin-type tail-anchored SNARE syntaxin 17 targets to autophagosomes for fusion with endosomes/lysosomes.</title>
        <authorList>
            <person name="Itakura E."/>
            <person name="Kishi-Itakura C."/>
            <person name="Mizushima N."/>
        </authorList>
    </citation>
    <scope>INTERACTION WITH VAMP7</scope>
</reference>
<reference key="7">
    <citation type="journal article" date="2016" name="Biol. Open">
        <title>LAMP-2 is required for incorporating syntaxin-17 into autophagosomes and for their fusion with lysosomes.</title>
        <authorList>
            <person name="Hubert V."/>
            <person name="Peschel A."/>
            <person name="Langer B."/>
            <person name="Groeger M."/>
            <person name="Rees A."/>
            <person name="Kain R."/>
        </authorList>
    </citation>
    <scope>SUBCELLULAR LOCATION</scope>
</reference>
<sequence>MSEDEEKVKLRRLEPAIQKFTKIVIPTDLERLRKHQINIEKYQRCRIWDKLHEEHINAGRTVQQLRSNIREMEKLCLKVHKDDLVLLKRMIDPVKEAAATATAEFLQLHLESVEELKKQVNDEELLQPSLTRSTTVDGVLHTGEAEAASQSLTQIYALPEIPQDQNAAESWETLEADLIELSHLVTDMSLLVSSQQEKIDSIADHVNSAAVNVEEGTKNLQKAAKYKLAALPVAGALIGGVVGGPIGLLAGFKVAGIAAALGGGVLGFTGGKLIQRRKQKMMEKLTSSCPDLPSQSDKKRS</sequence>
<keyword id="KW-0007">Acetylation</keyword>
<keyword id="KW-0072">Autophagy</keyword>
<keyword id="KW-0175">Coiled coil</keyword>
<keyword id="KW-0963">Cytoplasm</keyword>
<keyword id="KW-0968">Cytoplasmic vesicle</keyword>
<keyword id="KW-0256">Endoplasmic reticulum</keyword>
<keyword id="KW-0931">ER-Golgi transport</keyword>
<keyword id="KW-0458">Lysosome</keyword>
<keyword id="KW-0472">Membrane</keyword>
<keyword id="KW-0496">Mitochondrion</keyword>
<keyword id="KW-0597">Phosphoprotein</keyword>
<keyword id="KW-1185">Reference proteome</keyword>
<keyword id="KW-0812">Transmembrane</keyword>
<keyword id="KW-1133">Transmembrane helix</keyword>
<keyword id="KW-0813">Transport</keyword>
<comment type="function">
    <text evidence="1">SNAREs, soluble N-ethylmaleimide-sensitive factor-attachment protein receptors, are essential proteins for fusion of cellular membranes. SNAREs localized on opposing membranes assemble to form a trans-SNARE complex, an extended, parallel four alpha-helical bundle that drives membrane fusion. STX17 is a SNARE of the autophagosome involved in autophagy through the direct control of autophagosome membrane fusion with the lysosome membrane. May also play a role in the early secretory pathway where it may maintain the architecture of the endoplasmic reticulum-Golgi intermediate compartment/ERGIC and Golgi and/or regulate transport between the endoplasmic reticulum, the ERGIC and the Golgi (By similarity).</text>
</comment>
<comment type="subunit">
    <text evidence="1 2 6">Forms a SNARE complex composed of VAMP8, SNAP29 and STX17 involved in fusion of autophagosome with lysosome (By similarity). May interact with VTI1B (By similarity). Probably interacts with BET1, SCFD1 and SEC22B (By similarity). Interacts with PTPN2 and ABL1; involved in STX17 phosphorylation (By similarity). Interacts with COPB1 (By similarity). Interacts with TMED9 and TMED10; the interaction is direct (By similarity). Interacts with VAMP7 (PubMed:23217709). Interacts with RUBCNL/PACER; promoting targeting of RUBCNL/PACER to autophagosome (By similarity). Interacts with VAMP8, SNAP29, VPS39 and VPS41; these interactions are increased in the absence of TMEM39A (By similarity). Interacts with IRGM; promoting STX17 recruitment to autophagosomes (By similarity). Interacts with ATG8 proteins GABARAP and MAP1LC3B (By similarity). Interacts with RNF115; this interaction enhances STX17 stability which in turn promotes autophagosome maturation (By similarity). Interacts with RAB39A (GTP-bound); the interaction promotes autophagosome-lysosome membrane fusion driven by STX17-SNAP29-VAMP8 (By similarity). Interacts with RAB39B; the interaction may promote a different fonction in autophagy as compared with RAB39A (By similarity).</text>
</comment>
<comment type="subcellular location">
    <subcellularLocation>
        <location evidence="1">Endoplasmic reticulum membrane</location>
        <topology evidence="3">Multi-pass membrane protein</topology>
    </subcellularLocation>
    <subcellularLocation>
        <location evidence="2">Smooth endoplasmic reticulum membrane</location>
        <topology evidence="3">Multi-pass membrane protein</topology>
    </subcellularLocation>
    <subcellularLocation>
        <location evidence="1">Endoplasmic reticulum-Golgi intermediate compartment membrane</location>
        <topology evidence="3">Multi-pass membrane protein</topology>
    </subcellularLocation>
    <subcellularLocation>
        <location evidence="7">Cytoplasmic vesicle</location>
        <location evidence="7">Autophagosome membrane</location>
        <topology evidence="3">Multi-pass membrane protein</topology>
    </subcellularLocation>
    <subcellularLocation>
        <location evidence="2">Cytoplasmic vesicle</location>
        <location evidence="2">COPII-coated vesicle membrane</location>
        <topology evidence="3">Multi-pass membrane protein</topology>
    </subcellularLocation>
    <subcellularLocation>
        <location evidence="2">Cytoplasm</location>
        <location evidence="2">Cytosol</location>
    </subcellularLocation>
    <subcellularLocation>
        <location evidence="1">Mitochondrion membrane</location>
        <topology evidence="3">Multi-pass membrane protein</topology>
    </subcellularLocation>
    <subcellularLocation>
        <location evidence="1">Autolysosome membrane</location>
        <topology evidence="3">Multi-pass membrane protein</topology>
    </subcellularLocation>
    <text evidence="1">Has a hairpin-like insertion into membranes. Localizes to the completed autophagosome membrane upon cell starvation (By similarity). Colocalized with RAB39A and RAB39B in autolysosomes in autophagy-induced conditions (By similarity).</text>
</comment>
<comment type="PTM">
    <text evidence="2 5">Dephosphorylation by PTPN2; regulates exit from the endoplasmic reticulum (By similarity). Phosphorylated at Tyr-156 probably by ABL1 (PubMed:23006999).</text>
</comment>
<comment type="similarity">
    <text evidence="9">Belongs to the syntaxin family.</text>
</comment>
<feature type="initiator methionine" description="Removed" evidence="1">
    <location>
        <position position="1"/>
    </location>
</feature>
<feature type="chain" id="PRO_0000210229" description="Syntaxin-17">
    <location>
        <begin position="2"/>
        <end position="301"/>
    </location>
</feature>
<feature type="topological domain" description="Cytoplasmic" evidence="3">
    <location>
        <begin position="2"/>
        <end position="227"/>
    </location>
</feature>
<feature type="transmembrane region" description="Helical" evidence="3">
    <location>
        <begin position="228"/>
        <end position="248"/>
    </location>
</feature>
<feature type="topological domain" description="Lumenal" evidence="3">
    <location>
        <begin position="249"/>
        <end position="253"/>
    </location>
</feature>
<feature type="transmembrane region" description="Helical" evidence="3">
    <location>
        <begin position="254"/>
        <end position="274"/>
    </location>
</feature>
<feature type="topological domain" description="Cytoplasmic" evidence="3">
    <location>
        <begin position="275"/>
        <end position="301"/>
    </location>
</feature>
<feature type="domain" description="t-SNARE coiled-coil homology" evidence="4">
    <location>
        <begin position="161"/>
        <end position="223"/>
    </location>
</feature>
<feature type="region of interest" description="Necessary and sufficient for localization to autophagosome" evidence="1">
    <location>
        <begin position="228"/>
        <end position="274"/>
    </location>
</feature>
<feature type="coiled-coil region" evidence="3">
    <location>
        <begin position="49"/>
        <end position="128"/>
    </location>
</feature>
<feature type="short sequence motif" description="Endoplasmic reticulum retention signal" evidence="3">
    <location>
        <begin position="298"/>
        <end position="301"/>
    </location>
</feature>
<feature type="modified residue" description="N-acetylserine" evidence="1">
    <location>
        <position position="2"/>
    </location>
</feature>
<feature type="modified residue" description="N6-acetyllysine" evidence="1">
    <location>
        <position position="41"/>
    </location>
</feature>
<feature type="modified residue" description="Phosphotyrosine; by ABL1" evidence="2">
    <location>
        <position position="156"/>
    </location>
</feature>
<feature type="modified residue" description="Phosphoserine" evidence="11">
    <location>
        <position position="288"/>
    </location>
</feature>
<feature type="sequence conflict" description="In Ref. 1; BAB31255." evidence="9" ref="1">
    <original>S</original>
    <variation>G</variation>
    <location>
        <position position="294"/>
    </location>
</feature>
<organism>
    <name type="scientific">Mus musculus</name>
    <name type="common">Mouse</name>
    <dbReference type="NCBI Taxonomy" id="10090"/>
    <lineage>
        <taxon>Eukaryota</taxon>
        <taxon>Metazoa</taxon>
        <taxon>Chordata</taxon>
        <taxon>Craniata</taxon>
        <taxon>Vertebrata</taxon>
        <taxon>Euteleostomi</taxon>
        <taxon>Mammalia</taxon>
        <taxon>Eutheria</taxon>
        <taxon>Euarchontoglires</taxon>
        <taxon>Glires</taxon>
        <taxon>Rodentia</taxon>
        <taxon>Myomorpha</taxon>
        <taxon>Muroidea</taxon>
        <taxon>Muridae</taxon>
        <taxon>Murinae</taxon>
        <taxon>Mus</taxon>
        <taxon>Mus</taxon>
    </lineage>
</organism>